<accession>B8F5I8</accession>
<comment type="function">
    <text evidence="1">Condensation of UDP-2,3-diacylglucosamine and 2,3-diacylglucosamine-1-phosphate to form lipid A disaccharide, a precursor of lipid A, a phosphorylated glycolipid that anchors the lipopolysaccharide to the outer membrane of the cell.</text>
</comment>
<comment type="catalytic activity">
    <reaction evidence="1">
        <text>a lipid X + a UDP-2-N,3-O-bis[(3R)-3-hydroxyacyl]-alpha-D-glucosamine = a lipid A disaccharide + UDP + H(+)</text>
        <dbReference type="Rhea" id="RHEA:67828"/>
        <dbReference type="ChEBI" id="CHEBI:15378"/>
        <dbReference type="ChEBI" id="CHEBI:58223"/>
        <dbReference type="ChEBI" id="CHEBI:137748"/>
        <dbReference type="ChEBI" id="CHEBI:176338"/>
        <dbReference type="ChEBI" id="CHEBI:176343"/>
        <dbReference type="EC" id="2.4.1.182"/>
    </reaction>
</comment>
<comment type="pathway">
    <text evidence="1">Bacterial outer membrane biogenesis; LPS lipid A biosynthesis.</text>
</comment>
<comment type="similarity">
    <text evidence="1">Belongs to the LpxB family.</text>
</comment>
<proteinExistence type="inferred from homology"/>
<keyword id="KW-0328">Glycosyltransferase</keyword>
<keyword id="KW-0441">Lipid A biosynthesis</keyword>
<keyword id="KW-0444">Lipid biosynthesis</keyword>
<keyword id="KW-0443">Lipid metabolism</keyword>
<keyword id="KW-1185">Reference proteome</keyword>
<keyword id="KW-0808">Transferase</keyword>
<reference key="1">
    <citation type="journal article" date="2009" name="J. Bacteriol.">
        <title>Complete genome sequence of Haemophilus parasuis SH0165.</title>
        <authorList>
            <person name="Yue M."/>
            <person name="Yang F."/>
            <person name="Yang J."/>
            <person name="Bei W."/>
            <person name="Cai X."/>
            <person name="Chen L."/>
            <person name="Dong J."/>
            <person name="Zhou R."/>
            <person name="Jin M."/>
            <person name="Jin Q."/>
            <person name="Chen H."/>
        </authorList>
    </citation>
    <scope>NUCLEOTIDE SEQUENCE [LARGE SCALE GENOMIC DNA]</scope>
    <source>
        <strain>SH0165</strain>
    </source>
</reference>
<name>LPXB_GLAP5</name>
<dbReference type="EC" id="2.4.1.182" evidence="1"/>
<dbReference type="EMBL" id="CP001321">
    <property type="protein sequence ID" value="ACL32590.1"/>
    <property type="molecule type" value="Genomic_DNA"/>
</dbReference>
<dbReference type="RefSeq" id="WP_015939546.1">
    <property type="nucleotide sequence ID" value="NC_011852.1"/>
</dbReference>
<dbReference type="SMR" id="B8F5I8"/>
<dbReference type="STRING" id="557723.HAPS_0965"/>
<dbReference type="CAZy" id="GT19">
    <property type="family name" value="Glycosyltransferase Family 19"/>
</dbReference>
<dbReference type="KEGG" id="hap:HAPS_0965"/>
<dbReference type="PATRIC" id="fig|557723.8.peg.965"/>
<dbReference type="HOGENOM" id="CLU_036577_3_0_6"/>
<dbReference type="UniPathway" id="UPA00973"/>
<dbReference type="Proteomes" id="UP000006743">
    <property type="component" value="Chromosome"/>
</dbReference>
<dbReference type="GO" id="GO:0016020">
    <property type="term" value="C:membrane"/>
    <property type="evidence" value="ECO:0007669"/>
    <property type="project" value="GOC"/>
</dbReference>
<dbReference type="GO" id="GO:0008915">
    <property type="term" value="F:lipid-A-disaccharide synthase activity"/>
    <property type="evidence" value="ECO:0007669"/>
    <property type="project" value="UniProtKB-UniRule"/>
</dbReference>
<dbReference type="GO" id="GO:0005543">
    <property type="term" value="F:phospholipid binding"/>
    <property type="evidence" value="ECO:0007669"/>
    <property type="project" value="TreeGrafter"/>
</dbReference>
<dbReference type="GO" id="GO:0009245">
    <property type="term" value="P:lipid A biosynthetic process"/>
    <property type="evidence" value="ECO:0007669"/>
    <property type="project" value="UniProtKB-UniRule"/>
</dbReference>
<dbReference type="CDD" id="cd01635">
    <property type="entry name" value="Glycosyltransferase_GTB-type"/>
    <property type="match status" value="1"/>
</dbReference>
<dbReference type="HAMAP" id="MF_00392">
    <property type="entry name" value="LpxB"/>
    <property type="match status" value="1"/>
</dbReference>
<dbReference type="InterPro" id="IPR003835">
    <property type="entry name" value="Glyco_trans_19"/>
</dbReference>
<dbReference type="NCBIfam" id="TIGR00215">
    <property type="entry name" value="lpxB"/>
    <property type="match status" value="1"/>
</dbReference>
<dbReference type="PANTHER" id="PTHR30372">
    <property type="entry name" value="LIPID-A-DISACCHARIDE SYNTHASE"/>
    <property type="match status" value="1"/>
</dbReference>
<dbReference type="PANTHER" id="PTHR30372:SF4">
    <property type="entry name" value="LIPID-A-DISACCHARIDE SYNTHASE, MITOCHONDRIAL-RELATED"/>
    <property type="match status" value="1"/>
</dbReference>
<dbReference type="Pfam" id="PF02684">
    <property type="entry name" value="LpxB"/>
    <property type="match status" value="1"/>
</dbReference>
<dbReference type="SUPFAM" id="SSF53756">
    <property type="entry name" value="UDP-Glycosyltransferase/glycogen phosphorylase"/>
    <property type="match status" value="1"/>
</dbReference>
<feature type="chain" id="PRO_1000191487" description="Lipid-A-disaccharide synthase">
    <location>
        <begin position="1"/>
        <end position="387"/>
    </location>
</feature>
<gene>
    <name evidence="1" type="primary">lpxB</name>
    <name type="ordered locus">HAPS_0965</name>
</gene>
<organism>
    <name type="scientific">Glaesserella parasuis serovar 5 (strain SH0165)</name>
    <name type="common">Haemophilus parasuis</name>
    <dbReference type="NCBI Taxonomy" id="557723"/>
    <lineage>
        <taxon>Bacteria</taxon>
        <taxon>Pseudomonadati</taxon>
        <taxon>Pseudomonadota</taxon>
        <taxon>Gammaproteobacteria</taxon>
        <taxon>Pasteurellales</taxon>
        <taxon>Pasteurellaceae</taxon>
        <taxon>Glaesserella</taxon>
    </lineage>
</organism>
<sequence length="387" mass="43061">MTTSSPLIAIVAGEISGDILGAGLIKALKVHYPNARFIGVAGEKMLKEGCETLFDMEKLAVMGLAEVVRHLPRLLKRRKQVIDTMLALKPDIFIGIDAPDFNLGVEEKLKAQGIKTIHYVSPSVWAWRQNRVHKIASATDLVLAFLPFEKAFYDRFNVPCRFIGHTMADAIALQPNRQEACRLLQLDENQHYVAILVGSRGSEVNFLSEPFLKTAQLLKAQYPDVQFLVPLVNEKRREQFEAIKAQVAPELEVITLAGNARAAMMVAEATLLASGTAALEAMLCKSPMVVGYKMKPLTYWLAKRLVKTDYISLPNLLANEPLVPELIQADCSPENLAKHLSLYLSQMPEDVAKKNALKQRFMELHQYIQCDADAQAAQAVVDVLNRE</sequence>
<protein>
    <recommendedName>
        <fullName evidence="1">Lipid-A-disaccharide synthase</fullName>
        <ecNumber evidence="1">2.4.1.182</ecNumber>
    </recommendedName>
</protein>
<evidence type="ECO:0000255" key="1">
    <source>
        <dbReference type="HAMAP-Rule" id="MF_00392"/>
    </source>
</evidence>